<gene>
    <name evidence="1" type="primary">bchN</name>
    <name type="ordered locus">Hhal_1637</name>
</gene>
<protein>
    <recommendedName>
        <fullName evidence="1">Light-independent protochlorophyllide reductase subunit N</fullName>
        <shortName evidence="1">DPOR subunit N</shortName>
        <shortName evidence="1">LI-POR subunit N</shortName>
        <ecNumber evidence="1">1.3.7.7</ecNumber>
    </recommendedName>
</protein>
<reference key="1">
    <citation type="submission" date="2006-12" db="EMBL/GenBank/DDBJ databases">
        <title>Complete sequence of Halorhodospira halophila SL1.</title>
        <authorList>
            <consortium name="US DOE Joint Genome Institute"/>
            <person name="Copeland A."/>
            <person name="Lucas S."/>
            <person name="Lapidus A."/>
            <person name="Barry K."/>
            <person name="Detter J.C."/>
            <person name="Glavina del Rio T."/>
            <person name="Hammon N."/>
            <person name="Israni S."/>
            <person name="Dalin E."/>
            <person name="Tice H."/>
            <person name="Pitluck S."/>
            <person name="Saunders E."/>
            <person name="Brettin T."/>
            <person name="Bruce D."/>
            <person name="Han C."/>
            <person name="Tapia R."/>
            <person name="Schmutz J."/>
            <person name="Larimer F."/>
            <person name="Land M."/>
            <person name="Hauser L."/>
            <person name="Kyrpides N."/>
            <person name="Mikhailova N."/>
            <person name="Hoff W."/>
            <person name="Richardson P."/>
        </authorList>
    </citation>
    <scope>NUCLEOTIDE SEQUENCE [LARGE SCALE GENOMIC DNA]</scope>
    <source>
        <strain>DSM 244 / SL1</strain>
    </source>
</reference>
<keyword id="KW-0004">4Fe-4S</keyword>
<keyword id="KW-0067">ATP-binding</keyword>
<keyword id="KW-0077">Bacteriochlorophyll biosynthesis</keyword>
<keyword id="KW-0149">Chlorophyll biosynthesis</keyword>
<keyword id="KW-0408">Iron</keyword>
<keyword id="KW-0411">Iron-sulfur</keyword>
<keyword id="KW-0479">Metal-binding</keyword>
<keyword id="KW-0547">Nucleotide-binding</keyword>
<keyword id="KW-0560">Oxidoreductase</keyword>
<keyword id="KW-0602">Photosynthesis</keyword>
<keyword id="KW-1185">Reference proteome</keyword>
<name>BCHN_HALHL</name>
<comment type="function">
    <text evidence="1">Component of the dark-operative protochlorophyllide reductase (DPOR) that uses Mg-ATP and reduced ferredoxin to reduce ring D of protochlorophyllide (Pchlide) to form chlorophyllide a (Chlide). This reaction is light-independent. The NB-protein (BchN-BchB) is the catalytic component of the complex.</text>
</comment>
<comment type="catalytic activity">
    <reaction evidence="1">
        <text>chlorophyllide a + oxidized 2[4Fe-4S]-[ferredoxin] + 2 ADP + 2 phosphate = protochlorophyllide a + reduced 2[4Fe-4S]-[ferredoxin] + 2 ATP + 2 H2O</text>
        <dbReference type="Rhea" id="RHEA:28202"/>
        <dbReference type="Rhea" id="RHEA-COMP:10002"/>
        <dbReference type="Rhea" id="RHEA-COMP:10004"/>
        <dbReference type="ChEBI" id="CHEBI:15377"/>
        <dbReference type="ChEBI" id="CHEBI:30616"/>
        <dbReference type="ChEBI" id="CHEBI:33722"/>
        <dbReference type="ChEBI" id="CHEBI:33723"/>
        <dbReference type="ChEBI" id="CHEBI:43474"/>
        <dbReference type="ChEBI" id="CHEBI:83348"/>
        <dbReference type="ChEBI" id="CHEBI:83350"/>
        <dbReference type="ChEBI" id="CHEBI:456216"/>
        <dbReference type="EC" id="1.3.7.7"/>
    </reaction>
</comment>
<comment type="cofactor">
    <cofactor evidence="1">
        <name>[4Fe-4S] cluster</name>
        <dbReference type="ChEBI" id="CHEBI:49883"/>
    </cofactor>
    <text evidence="1">Binds 1 [4Fe-4S] cluster per heterodimer. The cluster is bound at the heterodimer interface by residues from both subunits.</text>
</comment>
<comment type="pathway">
    <text evidence="1">Porphyrin-containing compound metabolism; bacteriochlorophyll biosynthesis (light-independent).</text>
</comment>
<comment type="subunit">
    <text evidence="1">Protochlorophyllide reductase is composed of three subunits; BchL, BchN and BchB. Forms a heterotetramer of two BchB and two BchN subunits.</text>
</comment>
<comment type="similarity">
    <text evidence="1">Belongs to the BchN/ChlN family.</text>
</comment>
<accession>A1WXI9</accession>
<sequence length="424" mass="46254">MTESASCHGGGVCGGLAQEEGQRQVFCGLTSIVWLHRKMRDAFFLVVGSRTCAHLLQSAAGVMIFAEPRFATAVLGERDLAGMADCNEELDRVVHELLARRPEIRTLFLVGSCPSEVIKLDLGKAAERLTAAHEGRVRVLPYSGSGLETTFTQGEDQFLTTLAHELPASPEGAPSLIVLGTLADVVEDQFRRLFDQLGIGPVHFLPPRTGADLPPVGPGTRVLQAQPFTGEATRALIRRGAERLDAPYPLGVEGTRSWLQAATRSFGVPDEQLEAVIEAPIARAQAALERQRGVLSGKRITFLPDSQLELPLARFLSEECGMQPVEVATPYFDREFHGRERDALGEEVRLVEGQDVDAQLDRLRADRPDLTVCGLGLANPLEAEGLRTKWSIELVFSPIQGFEQAGDLAELFARPLVRHETLKV</sequence>
<dbReference type="EC" id="1.3.7.7" evidence="1"/>
<dbReference type="EMBL" id="CP000544">
    <property type="protein sequence ID" value="ABM62401.1"/>
    <property type="molecule type" value="Genomic_DNA"/>
</dbReference>
<dbReference type="RefSeq" id="WP_011814423.1">
    <property type="nucleotide sequence ID" value="NC_008789.1"/>
</dbReference>
<dbReference type="SMR" id="A1WXI9"/>
<dbReference type="STRING" id="349124.Hhal_1637"/>
<dbReference type="KEGG" id="hha:Hhal_1637"/>
<dbReference type="eggNOG" id="COG2710">
    <property type="taxonomic scope" value="Bacteria"/>
</dbReference>
<dbReference type="HOGENOM" id="CLU_037170_0_0_6"/>
<dbReference type="OrthoDB" id="5714774at2"/>
<dbReference type="UniPathway" id="UPA00671"/>
<dbReference type="Proteomes" id="UP000000647">
    <property type="component" value="Chromosome"/>
</dbReference>
<dbReference type="GO" id="GO:0051539">
    <property type="term" value="F:4 iron, 4 sulfur cluster binding"/>
    <property type="evidence" value="ECO:0007669"/>
    <property type="project" value="UniProtKB-UniRule"/>
</dbReference>
<dbReference type="GO" id="GO:0005524">
    <property type="term" value="F:ATP binding"/>
    <property type="evidence" value="ECO:0007669"/>
    <property type="project" value="UniProtKB-UniRule"/>
</dbReference>
<dbReference type="GO" id="GO:0046872">
    <property type="term" value="F:metal ion binding"/>
    <property type="evidence" value="ECO:0007669"/>
    <property type="project" value="UniProtKB-KW"/>
</dbReference>
<dbReference type="GO" id="GO:0016730">
    <property type="term" value="F:oxidoreductase activity, acting on iron-sulfur proteins as donors"/>
    <property type="evidence" value="ECO:0007669"/>
    <property type="project" value="InterPro"/>
</dbReference>
<dbReference type="GO" id="GO:0016636">
    <property type="term" value="F:oxidoreductase activity, acting on the CH-CH group of donors, iron-sulfur protein as acceptor"/>
    <property type="evidence" value="ECO:0007669"/>
    <property type="project" value="UniProtKB-UniRule"/>
</dbReference>
<dbReference type="GO" id="GO:0036070">
    <property type="term" value="P:light-independent bacteriochlorophyll biosynthetic process"/>
    <property type="evidence" value="ECO:0007669"/>
    <property type="project" value="UniProtKB-UniRule"/>
</dbReference>
<dbReference type="GO" id="GO:0019685">
    <property type="term" value="P:photosynthesis, dark reaction"/>
    <property type="evidence" value="ECO:0007669"/>
    <property type="project" value="InterPro"/>
</dbReference>
<dbReference type="Gene3D" id="3.40.50.1980">
    <property type="entry name" value="Nitrogenase molybdenum iron protein domain"/>
    <property type="match status" value="3"/>
</dbReference>
<dbReference type="HAMAP" id="MF_00352">
    <property type="entry name" value="ChlN_BchN"/>
    <property type="match status" value="1"/>
</dbReference>
<dbReference type="InterPro" id="IPR050293">
    <property type="entry name" value="LIPOR_BchN/ChlN"/>
</dbReference>
<dbReference type="InterPro" id="IPR000510">
    <property type="entry name" value="Nase/OxRdtase_comp1"/>
</dbReference>
<dbReference type="InterPro" id="IPR005970">
    <property type="entry name" value="Protochl_reductN"/>
</dbReference>
<dbReference type="NCBIfam" id="TIGR01279">
    <property type="entry name" value="DPOR_bchN"/>
    <property type="match status" value="1"/>
</dbReference>
<dbReference type="NCBIfam" id="NF002768">
    <property type="entry name" value="PRK02842.1"/>
    <property type="match status" value="1"/>
</dbReference>
<dbReference type="PANTHER" id="PTHR39429">
    <property type="entry name" value="LIGHT-INDEPENDENT PROTOCHLOROPHYLLIDE REDUCTASE SUBUNIT N"/>
    <property type="match status" value="1"/>
</dbReference>
<dbReference type="PANTHER" id="PTHR39429:SF3">
    <property type="entry name" value="LIGHT-INDEPENDENT PROTOCHLOROPHYLLIDE REDUCTASE SUBUNIT N"/>
    <property type="match status" value="1"/>
</dbReference>
<dbReference type="Pfam" id="PF00148">
    <property type="entry name" value="Oxidored_nitro"/>
    <property type="match status" value="1"/>
</dbReference>
<dbReference type="PIRSF" id="PIRSF000162">
    <property type="entry name" value="P_chlorophyll_rd"/>
    <property type="match status" value="1"/>
</dbReference>
<dbReference type="SUPFAM" id="SSF53807">
    <property type="entry name" value="Helical backbone' metal receptor"/>
    <property type="match status" value="1"/>
</dbReference>
<organism>
    <name type="scientific">Halorhodospira halophila (strain DSM 244 / SL1)</name>
    <name type="common">Ectothiorhodospira halophila (strain DSM 244 / SL1)</name>
    <dbReference type="NCBI Taxonomy" id="349124"/>
    <lineage>
        <taxon>Bacteria</taxon>
        <taxon>Pseudomonadati</taxon>
        <taxon>Pseudomonadota</taxon>
        <taxon>Gammaproteobacteria</taxon>
        <taxon>Chromatiales</taxon>
        <taxon>Ectothiorhodospiraceae</taxon>
        <taxon>Halorhodospira</taxon>
    </lineage>
</organism>
<feature type="chain" id="PRO_0000324005" description="Light-independent protochlorophyllide reductase subunit N">
    <location>
        <begin position="1"/>
        <end position="424"/>
    </location>
</feature>
<feature type="binding site" evidence="1">
    <location>
        <position position="27"/>
    </location>
    <ligand>
        <name>[4Fe-4S] cluster</name>
        <dbReference type="ChEBI" id="CHEBI:49883"/>
        <note>ligand shared with heterodimeric partner</note>
    </ligand>
</feature>
<feature type="binding site" evidence="1">
    <location>
        <position position="52"/>
    </location>
    <ligand>
        <name>[4Fe-4S] cluster</name>
        <dbReference type="ChEBI" id="CHEBI:49883"/>
        <note>ligand shared with heterodimeric partner</note>
    </ligand>
</feature>
<feature type="binding site" evidence="1">
    <location>
        <position position="113"/>
    </location>
    <ligand>
        <name>[4Fe-4S] cluster</name>
        <dbReference type="ChEBI" id="CHEBI:49883"/>
        <note>ligand shared with heterodimeric partner</note>
    </ligand>
</feature>
<proteinExistence type="inferred from homology"/>
<evidence type="ECO:0000255" key="1">
    <source>
        <dbReference type="HAMAP-Rule" id="MF_00352"/>
    </source>
</evidence>